<accession>Q7TS68</accession>
<accession>Q8R3C4</accession>
<accession>Q9D445</accession>
<reference key="1">
    <citation type="journal article" date="2005" name="Science">
        <title>The transcriptional landscape of the mammalian genome.</title>
        <authorList>
            <person name="Carninci P."/>
            <person name="Kasukawa T."/>
            <person name="Katayama S."/>
            <person name="Gough J."/>
            <person name="Frith M.C."/>
            <person name="Maeda N."/>
            <person name="Oyama R."/>
            <person name="Ravasi T."/>
            <person name="Lenhard B."/>
            <person name="Wells C."/>
            <person name="Kodzius R."/>
            <person name="Shimokawa K."/>
            <person name="Bajic V.B."/>
            <person name="Brenner S.E."/>
            <person name="Batalov S."/>
            <person name="Forrest A.R."/>
            <person name="Zavolan M."/>
            <person name="Davis M.J."/>
            <person name="Wilming L.G."/>
            <person name="Aidinis V."/>
            <person name="Allen J.E."/>
            <person name="Ambesi-Impiombato A."/>
            <person name="Apweiler R."/>
            <person name="Aturaliya R.N."/>
            <person name="Bailey T.L."/>
            <person name="Bansal M."/>
            <person name="Baxter L."/>
            <person name="Beisel K.W."/>
            <person name="Bersano T."/>
            <person name="Bono H."/>
            <person name="Chalk A.M."/>
            <person name="Chiu K.P."/>
            <person name="Choudhary V."/>
            <person name="Christoffels A."/>
            <person name="Clutterbuck D.R."/>
            <person name="Crowe M.L."/>
            <person name="Dalla E."/>
            <person name="Dalrymple B.P."/>
            <person name="de Bono B."/>
            <person name="Della Gatta G."/>
            <person name="di Bernardo D."/>
            <person name="Down T."/>
            <person name="Engstrom P."/>
            <person name="Fagiolini M."/>
            <person name="Faulkner G."/>
            <person name="Fletcher C.F."/>
            <person name="Fukushima T."/>
            <person name="Furuno M."/>
            <person name="Futaki S."/>
            <person name="Gariboldi M."/>
            <person name="Georgii-Hemming P."/>
            <person name="Gingeras T.R."/>
            <person name="Gojobori T."/>
            <person name="Green R.E."/>
            <person name="Gustincich S."/>
            <person name="Harbers M."/>
            <person name="Hayashi Y."/>
            <person name="Hensch T.K."/>
            <person name="Hirokawa N."/>
            <person name="Hill D."/>
            <person name="Huminiecki L."/>
            <person name="Iacono M."/>
            <person name="Ikeo K."/>
            <person name="Iwama A."/>
            <person name="Ishikawa T."/>
            <person name="Jakt M."/>
            <person name="Kanapin A."/>
            <person name="Katoh M."/>
            <person name="Kawasawa Y."/>
            <person name="Kelso J."/>
            <person name="Kitamura H."/>
            <person name="Kitano H."/>
            <person name="Kollias G."/>
            <person name="Krishnan S.P."/>
            <person name="Kruger A."/>
            <person name="Kummerfeld S.K."/>
            <person name="Kurochkin I.V."/>
            <person name="Lareau L.F."/>
            <person name="Lazarevic D."/>
            <person name="Lipovich L."/>
            <person name="Liu J."/>
            <person name="Liuni S."/>
            <person name="McWilliam S."/>
            <person name="Madan Babu M."/>
            <person name="Madera M."/>
            <person name="Marchionni L."/>
            <person name="Matsuda H."/>
            <person name="Matsuzawa S."/>
            <person name="Miki H."/>
            <person name="Mignone F."/>
            <person name="Miyake S."/>
            <person name="Morris K."/>
            <person name="Mottagui-Tabar S."/>
            <person name="Mulder N."/>
            <person name="Nakano N."/>
            <person name="Nakauchi H."/>
            <person name="Ng P."/>
            <person name="Nilsson R."/>
            <person name="Nishiguchi S."/>
            <person name="Nishikawa S."/>
            <person name="Nori F."/>
            <person name="Ohara O."/>
            <person name="Okazaki Y."/>
            <person name="Orlando V."/>
            <person name="Pang K.C."/>
            <person name="Pavan W.J."/>
            <person name="Pavesi G."/>
            <person name="Pesole G."/>
            <person name="Petrovsky N."/>
            <person name="Piazza S."/>
            <person name="Reed J."/>
            <person name="Reid J.F."/>
            <person name="Ring B.Z."/>
            <person name="Ringwald M."/>
            <person name="Rost B."/>
            <person name="Ruan Y."/>
            <person name="Salzberg S.L."/>
            <person name="Sandelin A."/>
            <person name="Schneider C."/>
            <person name="Schoenbach C."/>
            <person name="Sekiguchi K."/>
            <person name="Semple C.A."/>
            <person name="Seno S."/>
            <person name="Sessa L."/>
            <person name="Sheng Y."/>
            <person name="Shibata Y."/>
            <person name="Shimada H."/>
            <person name="Shimada K."/>
            <person name="Silva D."/>
            <person name="Sinclair B."/>
            <person name="Sperling S."/>
            <person name="Stupka E."/>
            <person name="Sugiura K."/>
            <person name="Sultana R."/>
            <person name="Takenaka Y."/>
            <person name="Taki K."/>
            <person name="Tammoja K."/>
            <person name="Tan S.L."/>
            <person name="Tang S."/>
            <person name="Taylor M.S."/>
            <person name="Tegner J."/>
            <person name="Teichmann S.A."/>
            <person name="Ueda H.R."/>
            <person name="van Nimwegen E."/>
            <person name="Verardo R."/>
            <person name="Wei C.L."/>
            <person name="Yagi K."/>
            <person name="Yamanishi H."/>
            <person name="Zabarovsky E."/>
            <person name="Zhu S."/>
            <person name="Zimmer A."/>
            <person name="Hide W."/>
            <person name="Bult C."/>
            <person name="Grimmond S.M."/>
            <person name="Teasdale R.D."/>
            <person name="Liu E.T."/>
            <person name="Brusic V."/>
            <person name="Quackenbush J."/>
            <person name="Wahlestedt C."/>
            <person name="Mattick J.S."/>
            <person name="Hume D.A."/>
            <person name="Kai C."/>
            <person name="Sasaki D."/>
            <person name="Tomaru Y."/>
            <person name="Fukuda S."/>
            <person name="Kanamori-Katayama M."/>
            <person name="Suzuki M."/>
            <person name="Aoki J."/>
            <person name="Arakawa T."/>
            <person name="Iida J."/>
            <person name="Imamura K."/>
            <person name="Itoh M."/>
            <person name="Kato T."/>
            <person name="Kawaji H."/>
            <person name="Kawagashira N."/>
            <person name="Kawashima T."/>
            <person name="Kojima M."/>
            <person name="Kondo S."/>
            <person name="Konno H."/>
            <person name="Nakano K."/>
            <person name="Ninomiya N."/>
            <person name="Nishio T."/>
            <person name="Okada M."/>
            <person name="Plessy C."/>
            <person name="Shibata K."/>
            <person name="Shiraki T."/>
            <person name="Suzuki S."/>
            <person name="Tagami M."/>
            <person name="Waki K."/>
            <person name="Watahiki A."/>
            <person name="Okamura-Oho Y."/>
            <person name="Suzuki H."/>
            <person name="Kawai J."/>
            <person name="Hayashizaki Y."/>
        </authorList>
    </citation>
    <scope>NUCLEOTIDE SEQUENCE [LARGE SCALE MRNA]</scope>
    <source>
        <strain>C57BL/6J</strain>
        <tissue>Skin</tissue>
        <tissue>Testis</tissue>
        <tissue>Thymus</tissue>
    </source>
</reference>
<reference key="2">
    <citation type="journal article" date="2004" name="Genome Res.">
        <title>The status, quality, and expansion of the NIH full-length cDNA project: the Mammalian Gene Collection (MGC).</title>
        <authorList>
            <consortium name="The MGC Project Team"/>
        </authorList>
    </citation>
    <scope>NUCLEOTIDE SEQUENCE [LARGE SCALE MRNA]</scope>
    <source>
        <strain>C57BL/6J</strain>
        <strain>FVB/N</strain>
        <tissue>Embryo</tissue>
        <tissue>Mammary tumor</tissue>
    </source>
</reference>
<protein>
    <recommendedName>
        <fullName evidence="4">tRNA (cytosine(72)-C(5))-methyltransferase NSUN6</fullName>
        <ecNumber evidence="1">2.1.1.-</ecNumber>
    </recommendedName>
    <alternativeName>
        <fullName>NOL1/NOP2/Sun domain family member 6</fullName>
    </alternativeName>
</protein>
<sequence length="476" mass="52279">MYVFPKISLRPEVENYLKESFLNEEAVSASSRQEAERKFETLLLRLSHPPSMTTVRVNTHLGSVQHVRGLLLEELQKQFGESSIPVVQHPALPDVLLIPMTGPRKNIERQQGEVIVGAQCGNAVLRGAHVYVPGIVSASKFMKAGDVISVYSDINGKCKKGAKEFDGTKVFLGNGISELSRKDIFNGLPDLKGIGIRMTEPIYLSPSFDNVLPSYIFLQNLPSTVVAHVLDPQPGEKILDMCAAPGGKTTHTAALMQDKGEVIALDKILTKVNKLKQNASLLGLHSIRAFCFDATKALKLDTTDGIEGGPPFLPESFDRIILDAPCSGMGQRPNMACTWTLKEVTSYQPLQRKLLHVAVQLLKPGGVLVYSTCTITLAENEEQVAWALRTFPCLQLQPQEPQIGGEGMVGAGLTLEQLKQLQRFDPSVVPLQNMDTDSLGEARREDMIWLANKDCIGFFIAKFLKCQSTKAKVSQK</sequence>
<dbReference type="EC" id="2.1.1.-" evidence="1"/>
<dbReference type="EMBL" id="AK016811">
    <property type="protein sequence ID" value="BAB30442.1"/>
    <property type="molecule type" value="mRNA"/>
</dbReference>
<dbReference type="EMBL" id="AK077778">
    <property type="protein sequence ID" value="BAC37002.1"/>
    <property type="molecule type" value="mRNA"/>
</dbReference>
<dbReference type="EMBL" id="AK132428">
    <property type="protein sequence ID" value="BAE21163.1"/>
    <property type="molecule type" value="mRNA"/>
</dbReference>
<dbReference type="EMBL" id="BC025622">
    <property type="protein sequence ID" value="AAH25622.1"/>
    <property type="status" value="ALT_INIT"/>
    <property type="molecule type" value="mRNA"/>
</dbReference>
<dbReference type="EMBL" id="BC053751">
    <property type="protein sequence ID" value="AAH53751.1"/>
    <property type="molecule type" value="mRNA"/>
</dbReference>
<dbReference type="CCDS" id="CCDS15703.1"/>
<dbReference type="RefSeq" id="NP_001159413.1">
    <property type="nucleotide sequence ID" value="NM_001165941.2"/>
</dbReference>
<dbReference type="RefSeq" id="NP_083226.3">
    <property type="nucleotide sequence ID" value="NM_028950.4"/>
</dbReference>
<dbReference type="SMR" id="Q7TS68"/>
<dbReference type="FunCoup" id="Q7TS68">
    <property type="interactions" value="1932"/>
</dbReference>
<dbReference type="STRING" id="10090.ENSMUSP00000141924"/>
<dbReference type="iPTMnet" id="Q7TS68"/>
<dbReference type="PhosphoSitePlus" id="Q7TS68"/>
<dbReference type="jPOST" id="Q7TS68"/>
<dbReference type="PaxDb" id="10090-ENSMUSP00000075766"/>
<dbReference type="ProteomicsDB" id="252861"/>
<dbReference type="Pumba" id="Q7TS68"/>
<dbReference type="Antibodypedia" id="25416">
    <property type="antibodies" value="126 antibodies from 25 providers"/>
</dbReference>
<dbReference type="DNASU" id="74455"/>
<dbReference type="Ensembl" id="ENSMUST00000028034.15">
    <property type="protein sequence ID" value="ENSMUSP00000028034.9"/>
    <property type="gene ID" value="ENSMUSG00000026707.16"/>
</dbReference>
<dbReference type="Ensembl" id="ENSMUST00000076435.9">
    <property type="protein sequence ID" value="ENSMUSP00000075766.3"/>
    <property type="gene ID" value="ENSMUSG00000026707.16"/>
</dbReference>
<dbReference type="Ensembl" id="ENSMUST00000195749.6">
    <property type="protein sequence ID" value="ENSMUSP00000141924.2"/>
    <property type="gene ID" value="ENSMUSG00000026707.16"/>
</dbReference>
<dbReference type="GeneID" id="74455"/>
<dbReference type="KEGG" id="mmu:74455"/>
<dbReference type="UCSC" id="uc008ikt.2">
    <property type="organism name" value="mouse"/>
</dbReference>
<dbReference type="AGR" id="MGI:1921705"/>
<dbReference type="CTD" id="221078"/>
<dbReference type="MGI" id="MGI:1921705">
    <property type="gene designation" value="Nsun6"/>
</dbReference>
<dbReference type="VEuPathDB" id="HostDB:ENSMUSG00000026707"/>
<dbReference type="eggNOG" id="KOG1122">
    <property type="taxonomic scope" value="Eukaryota"/>
</dbReference>
<dbReference type="GeneTree" id="ENSGT00940000155370"/>
<dbReference type="InParanoid" id="Q7TS68"/>
<dbReference type="OMA" id="YQGAMLY"/>
<dbReference type="OrthoDB" id="260824at2759"/>
<dbReference type="PhylomeDB" id="Q7TS68"/>
<dbReference type="TreeFam" id="TF324225"/>
<dbReference type="BioGRID-ORCS" id="74455">
    <property type="hits" value="5 hits in 73 CRISPR screens"/>
</dbReference>
<dbReference type="ChiTaRS" id="Nsun6">
    <property type="organism name" value="mouse"/>
</dbReference>
<dbReference type="PRO" id="PR:Q7TS68"/>
<dbReference type="Proteomes" id="UP000000589">
    <property type="component" value="Chromosome 2"/>
</dbReference>
<dbReference type="RNAct" id="Q7TS68">
    <property type="molecule type" value="protein"/>
</dbReference>
<dbReference type="Bgee" id="ENSMUSG00000026707">
    <property type="expression patterns" value="Expressed in lens placode and 191 other cell types or tissues"/>
</dbReference>
<dbReference type="ExpressionAtlas" id="Q7TS68">
    <property type="expression patterns" value="baseline and differential"/>
</dbReference>
<dbReference type="GO" id="GO:0005737">
    <property type="term" value="C:cytoplasm"/>
    <property type="evidence" value="ECO:0007669"/>
    <property type="project" value="UniProtKB-SubCell"/>
</dbReference>
<dbReference type="GO" id="GO:0016428">
    <property type="term" value="F:tRNA (cytidine-5-)-methyltransferase activity"/>
    <property type="evidence" value="ECO:0000250"/>
    <property type="project" value="UniProtKB"/>
</dbReference>
<dbReference type="GO" id="GO:0000049">
    <property type="term" value="F:tRNA binding"/>
    <property type="evidence" value="ECO:0000250"/>
    <property type="project" value="UniProtKB"/>
</dbReference>
<dbReference type="GO" id="GO:0002946">
    <property type="term" value="P:tRNA C5-cytosine methylation"/>
    <property type="evidence" value="ECO:0000250"/>
    <property type="project" value="UniProtKB"/>
</dbReference>
<dbReference type="GO" id="GO:0030488">
    <property type="term" value="P:tRNA methylation"/>
    <property type="evidence" value="ECO:0000250"/>
    <property type="project" value="UniProtKB"/>
</dbReference>
<dbReference type="CDD" id="cd02440">
    <property type="entry name" value="AdoMet_MTases"/>
    <property type="match status" value="1"/>
</dbReference>
<dbReference type="CDD" id="cd21150">
    <property type="entry name" value="PUA_NSun6-like"/>
    <property type="match status" value="1"/>
</dbReference>
<dbReference type="Gene3D" id="2.30.130.10">
    <property type="entry name" value="PUA domain"/>
    <property type="match status" value="1"/>
</dbReference>
<dbReference type="Gene3D" id="3.40.50.150">
    <property type="entry name" value="Vaccinia Virus protein VP39"/>
    <property type="match status" value="1"/>
</dbReference>
<dbReference type="InterPro" id="IPR049560">
    <property type="entry name" value="MeTrfase_RsmB-F_NOP2_cat"/>
</dbReference>
<dbReference type="InterPro" id="IPR001678">
    <property type="entry name" value="MeTrfase_RsmB-F_NOP2_dom"/>
</dbReference>
<dbReference type="InterPro" id="IPR002478">
    <property type="entry name" value="PUA"/>
</dbReference>
<dbReference type="InterPro" id="IPR015947">
    <property type="entry name" value="PUA-like_sf"/>
</dbReference>
<dbReference type="InterPro" id="IPR036974">
    <property type="entry name" value="PUA_sf"/>
</dbReference>
<dbReference type="InterPro" id="IPR023267">
    <property type="entry name" value="RCMT"/>
</dbReference>
<dbReference type="InterPro" id="IPR029063">
    <property type="entry name" value="SAM-dependent_MTases_sf"/>
</dbReference>
<dbReference type="PANTHER" id="PTHR22807">
    <property type="entry name" value="NOP2 YEAST -RELATED NOL1/NOP2/FMU SUN DOMAIN-CONTAINING"/>
    <property type="match status" value="1"/>
</dbReference>
<dbReference type="PANTHER" id="PTHR22807:SF34">
    <property type="entry name" value="TRNA (CYTOSINE(72)-C(5))-METHYLTRANSFERASE NSUN6"/>
    <property type="match status" value="1"/>
</dbReference>
<dbReference type="Pfam" id="PF01189">
    <property type="entry name" value="Methyltr_RsmB-F"/>
    <property type="match status" value="1"/>
</dbReference>
<dbReference type="PRINTS" id="PR02008">
    <property type="entry name" value="RCMTFAMILY"/>
</dbReference>
<dbReference type="SMART" id="SM00359">
    <property type="entry name" value="PUA"/>
    <property type="match status" value="1"/>
</dbReference>
<dbReference type="SUPFAM" id="SSF88697">
    <property type="entry name" value="PUA domain-like"/>
    <property type="match status" value="1"/>
</dbReference>
<dbReference type="SUPFAM" id="SSF53335">
    <property type="entry name" value="S-adenosyl-L-methionine-dependent methyltransferases"/>
    <property type="match status" value="1"/>
</dbReference>
<dbReference type="PROSITE" id="PS50890">
    <property type="entry name" value="PUA"/>
    <property type="match status" value="1"/>
</dbReference>
<dbReference type="PROSITE" id="PS51686">
    <property type="entry name" value="SAM_MT_RSMB_NOP"/>
    <property type="match status" value="1"/>
</dbReference>
<keyword id="KW-0007">Acetylation</keyword>
<keyword id="KW-0963">Cytoplasm</keyword>
<keyword id="KW-0489">Methyltransferase</keyword>
<keyword id="KW-1185">Reference proteome</keyword>
<keyword id="KW-0694">RNA-binding</keyword>
<keyword id="KW-0949">S-adenosyl-L-methionine</keyword>
<keyword id="KW-0808">Transferase</keyword>
<gene>
    <name evidence="5" type="primary">Nsun6</name>
</gene>
<proteinExistence type="evidence at transcript level"/>
<name>NSUN6_MOUSE</name>
<feature type="chain" id="PRO_0000263115" description="tRNA (cytosine(72)-C(5))-methyltransferase NSUN6">
    <location>
        <begin position="1"/>
        <end position="476"/>
    </location>
</feature>
<feature type="domain" description="PUA" evidence="2">
    <location>
        <begin position="111"/>
        <end position="203"/>
    </location>
</feature>
<feature type="active site" description="Nucleophile" evidence="3">
    <location>
        <position position="373"/>
    </location>
</feature>
<feature type="binding site" evidence="3">
    <location>
        <begin position="242"/>
        <end position="248"/>
    </location>
    <ligand>
        <name>S-adenosyl-L-methionine</name>
        <dbReference type="ChEBI" id="CHEBI:59789"/>
    </ligand>
</feature>
<feature type="binding site" evidence="3">
    <location>
        <position position="266"/>
    </location>
    <ligand>
        <name>S-adenosyl-L-methionine</name>
        <dbReference type="ChEBI" id="CHEBI:59789"/>
    </ligand>
</feature>
<feature type="binding site" evidence="3">
    <location>
        <position position="293"/>
    </location>
    <ligand>
        <name>S-adenosyl-L-methionine</name>
        <dbReference type="ChEBI" id="CHEBI:59789"/>
    </ligand>
</feature>
<feature type="binding site" evidence="3">
    <location>
        <position position="323"/>
    </location>
    <ligand>
        <name>S-adenosyl-L-methionine</name>
        <dbReference type="ChEBI" id="CHEBI:59789"/>
    </ligand>
</feature>
<feature type="modified residue" description="N6-acetyllysine" evidence="1">
    <location>
        <position position="419"/>
    </location>
</feature>
<feature type="sequence conflict" description="In Ref. 2; AAH53751." evidence="4" ref="2">
    <original>D</original>
    <variation>E</variation>
    <location>
        <position position="240"/>
    </location>
</feature>
<comment type="function">
    <text evidence="1">S-adenosyl-L-methionine-dependent methyltransferase that specifically methylates the C5 position of cytosine 72 in tRNA(Thr)(TGT) and tRNA(Cys)(GCA). In vitro also methylates tRNA(Thr)(AGT). Methylation requires, in the acceptor stem region, the presence of the 3'-CCA terminus, the target site C72, the discriminator base U73, and the second and third base pairs (2:71 and 3:70) in the tRNA substrates.</text>
</comment>
<comment type="catalytic activity">
    <reaction evidence="1">
        <text>cytidine(72) in tRNA(Thr) + S-adenosyl-L-methionine = 5-methylcytidine(72) in tRNA(Thr) + S-adenosyl-L-homocysteine + H(+)</text>
        <dbReference type="Rhea" id="RHEA:21124"/>
        <dbReference type="Rhea" id="RHEA-COMP:15877"/>
        <dbReference type="Rhea" id="RHEA-COMP:15878"/>
        <dbReference type="ChEBI" id="CHEBI:15378"/>
        <dbReference type="ChEBI" id="CHEBI:57856"/>
        <dbReference type="ChEBI" id="CHEBI:59789"/>
        <dbReference type="ChEBI" id="CHEBI:74483"/>
        <dbReference type="ChEBI" id="CHEBI:82748"/>
    </reaction>
    <physiologicalReaction direction="left-to-right" evidence="1">
        <dbReference type="Rhea" id="RHEA:21125"/>
    </physiologicalReaction>
</comment>
<comment type="catalytic activity">
    <reaction evidence="1">
        <text>cytidine(72) in tRNA(Cys) + S-adenosyl-L-methionine = 5-methylcytidine(72) in tRNA(Cys) + S-adenosyl-L-homocysteine + H(+)</text>
        <dbReference type="Rhea" id="RHEA:61584"/>
        <dbReference type="Rhea" id="RHEA-COMP:15875"/>
        <dbReference type="Rhea" id="RHEA-COMP:15876"/>
        <dbReference type="ChEBI" id="CHEBI:15378"/>
        <dbReference type="ChEBI" id="CHEBI:57856"/>
        <dbReference type="ChEBI" id="CHEBI:59789"/>
        <dbReference type="ChEBI" id="CHEBI:74483"/>
        <dbReference type="ChEBI" id="CHEBI:82748"/>
    </reaction>
    <physiologicalReaction direction="left-to-right" evidence="1">
        <dbReference type="Rhea" id="RHEA:61585"/>
    </physiologicalReaction>
</comment>
<comment type="subcellular location">
    <subcellularLocation>
        <location evidence="1">Cytoplasm</location>
    </subcellularLocation>
</comment>
<comment type="domain">
    <text evidence="1">The PUA domain plays a role in tRNA recognition through precisely recognizing the CCA end and the D-stem region of tRNA.</text>
</comment>
<comment type="similarity">
    <text evidence="3">Belongs to the class I-like SAM-binding methyltransferase superfamily. RsmB/NOP family.</text>
</comment>
<comment type="sequence caution" evidence="4">
    <conflict type="erroneous initiation">
        <sequence resource="EMBL-CDS" id="AAH25622"/>
    </conflict>
</comment>
<organism>
    <name type="scientific">Mus musculus</name>
    <name type="common">Mouse</name>
    <dbReference type="NCBI Taxonomy" id="10090"/>
    <lineage>
        <taxon>Eukaryota</taxon>
        <taxon>Metazoa</taxon>
        <taxon>Chordata</taxon>
        <taxon>Craniata</taxon>
        <taxon>Vertebrata</taxon>
        <taxon>Euteleostomi</taxon>
        <taxon>Mammalia</taxon>
        <taxon>Eutheria</taxon>
        <taxon>Euarchontoglires</taxon>
        <taxon>Glires</taxon>
        <taxon>Rodentia</taxon>
        <taxon>Myomorpha</taxon>
        <taxon>Muroidea</taxon>
        <taxon>Muridae</taxon>
        <taxon>Murinae</taxon>
        <taxon>Mus</taxon>
        <taxon>Mus</taxon>
    </lineage>
</organism>
<evidence type="ECO:0000250" key="1">
    <source>
        <dbReference type="UniProtKB" id="Q8TEA1"/>
    </source>
</evidence>
<evidence type="ECO:0000255" key="2">
    <source>
        <dbReference type="PROSITE-ProRule" id="PRU00161"/>
    </source>
</evidence>
<evidence type="ECO:0000255" key="3">
    <source>
        <dbReference type="PROSITE-ProRule" id="PRU01023"/>
    </source>
</evidence>
<evidence type="ECO:0000305" key="4"/>
<evidence type="ECO:0000312" key="5">
    <source>
        <dbReference type="MGI" id="MGI:1921705"/>
    </source>
</evidence>